<keyword id="KW-0997">Cell inner membrane</keyword>
<keyword id="KW-1003">Cell membrane</keyword>
<keyword id="KW-0472">Membrane</keyword>
<keyword id="KW-1185">Reference proteome</keyword>
<keyword id="KW-0812">Transmembrane</keyword>
<keyword id="KW-1133">Transmembrane helix</keyword>
<keyword id="KW-0813">Transport</keyword>
<accession>P44993</accession>
<dbReference type="EMBL" id="L42023">
    <property type="protein sequence ID" value="AAC22689.1"/>
    <property type="molecule type" value="Genomic_DNA"/>
</dbReference>
<dbReference type="PIR" id="A64165">
    <property type="entry name" value="A64165"/>
</dbReference>
<dbReference type="RefSeq" id="NP_439189.1">
    <property type="nucleotide sequence ID" value="NC_000907.1"/>
</dbReference>
<dbReference type="SMR" id="P44993"/>
<dbReference type="STRING" id="71421.HI_1029"/>
<dbReference type="EnsemblBacteria" id="AAC22689">
    <property type="protein sequence ID" value="AAC22689"/>
    <property type="gene ID" value="HI_1029"/>
</dbReference>
<dbReference type="KEGG" id="hin:HI_1029"/>
<dbReference type="PATRIC" id="fig|71421.8.peg.1073"/>
<dbReference type="eggNOG" id="COG1593">
    <property type="taxonomic scope" value="Bacteria"/>
</dbReference>
<dbReference type="HOGENOM" id="CLU_019824_4_1_6"/>
<dbReference type="OrthoDB" id="8627919at2"/>
<dbReference type="PhylomeDB" id="P44993"/>
<dbReference type="BioCyc" id="HINF71421:G1GJ1-1069-MONOMER"/>
<dbReference type="Proteomes" id="UP000000579">
    <property type="component" value="Chromosome"/>
</dbReference>
<dbReference type="GO" id="GO:0005886">
    <property type="term" value="C:plasma membrane"/>
    <property type="evidence" value="ECO:0000318"/>
    <property type="project" value="GO_Central"/>
</dbReference>
<dbReference type="GO" id="GO:0015144">
    <property type="term" value="F:carbohydrate transmembrane transporter activity"/>
    <property type="evidence" value="ECO:0000318"/>
    <property type="project" value="GO_Central"/>
</dbReference>
<dbReference type="InterPro" id="IPR010656">
    <property type="entry name" value="DctM"/>
</dbReference>
<dbReference type="InterPro" id="IPR004681">
    <property type="entry name" value="TRAP_DctM"/>
</dbReference>
<dbReference type="NCBIfam" id="TIGR00786">
    <property type="entry name" value="dctM"/>
    <property type="match status" value="1"/>
</dbReference>
<dbReference type="PANTHER" id="PTHR33362:SF4">
    <property type="entry name" value="2,3-DIKETO-L-GULONATE TRAP TRANSPORTER LARGE PERMEASE PROTEIN YIAN"/>
    <property type="match status" value="1"/>
</dbReference>
<dbReference type="PANTHER" id="PTHR33362">
    <property type="entry name" value="SIALIC ACID TRAP TRANSPORTER PERMEASE PROTEIN SIAT-RELATED"/>
    <property type="match status" value="1"/>
</dbReference>
<dbReference type="Pfam" id="PF06808">
    <property type="entry name" value="DctM"/>
    <property type="match status" value="1"/>
</dbReference>
<dbReference type="PIRSF" id="PIRSF006066">
    <property type="entry name" value="HI0050"/>
    <property type="match status" value="1"/>
</dbReference>
<proteinExistence type="inferred from homology"/>
<evidence type="ECO:0000255" key="1"/>
<evidence type="ECO:0000305" key="2"/>
<gene>
    <name type="ordered locus">HI_1029</name>
</gene>
<protein>
    <recommendedName>
        <fullName>Putative TRAP transporter large permease protein HI_1029</fullName>
    </recommendedName>
</protein>
<feature type="chain" id="PRO_0000169599" description="Putative TRAP transporter large permease protein HI_1029">
    <location>
        <begin position="1"/>
        <end position="425"/>
    </location>
</feature>
<feature type="transmembrane region" description="Helical" evidence="1">
    <location>
        <begin position="3"/>
        <end position="23"/>
    </location>
</feature>
<feature type="transmembrane region" description="Helical" evidence="1">
    <location>
        <begin position="24"/>
        <end position="44"/>
    </location>
</feature>
<feature type="transmembrane region" description="Helical" evidence="1">
    <location>
        <begin position="54"/>
        <end position="74"/>
    </location>
</feature>
<feature type="transmembrane region" description="Helical" evidence="1">
    <location>
        <begin position="93"/>
        <end position="113"/>
    </location>
</feature>
<feature type="transmembrane region" description="Helical" evidence="1">
    <location>
        <begin position="139"/>
        <end position="159"/>
    </location>
</feature>
<feature type="transmembrane region" description="Helical" evidence="1">
    <location>
        <begin position="169"/>
        <end position="189"/>
    </location>
</feature>
<feature type="transmembrane region" description="Helical" evidence="1">
    <location>
        <begin position="217"/>
        <end position="237"/>
    </location>
</feature>
<feature type="transmembrane region" description="Helical" evidence="1">
    <location>
        <begin position="241"/>
        <end position="261"/>
    </location>
</feature>
<feature type="transmembrane region" description="Helical" evidence="1">
    <location>
        <begin position="275"/>
        <end position="295"/>
    </location>
</feature>
<feature type="transmembrane region" description="Helical" evidence="1">
    <location>
        <begin position="312"/>
        <end position="332"/>
    </location>
</feature>
<feature type="transmembrane region" description="Helical" evidence="1">
    <location>
        <begin position="334"/>
        <end position="354"/>
    </location>
</feature>
<feature type="transmembrane region" description="Helical" evidence="1">
    <location>
        <begin position="355"/>
        <end position="375"/>
    </location>
</feature>
<feature type="transmembrane region" description="Helical" evidence="1">
    <location>
        <begin position="399"/>
        <end position="419"/>
    </location>
</feature>
<reference key="1">
    <citation type="journal article" date="1995" name="Science">
        <title>Whole-genome random sequencing and assembly of Haemophilus influenzae Rd.</title>
        <authorList>
            <person name="Fleischmann R.D."/>
            <person name="Adams M.D."/>
            <person name="White O."/>
            <person name="Clayton R.A."/>
            <person name="Kirkness E.F."/>
            <person name="Kerlavage A.R."/>
            <person name="Bult C.J."/>
            <person name="Tomb J.-F."/>
            <person name="Dougherty B.A."/>
            <person name="Merrick J.M."/>
            <person name="McKenney K."/>
            <person name="Sutton G.G."/>
            <person name="FitzHugh W."/>
            <person name="Fields C.A."/>
            <person name="Gocayne J.D."/>
            <person name="Scott J.D."/>
            <person name="Shirley R."/>
            <person name="Liu L.-I."/>
            <person name="Glodek A."/>
            <person name="Kelley J.M."/>
            <person name="Weidman J.F."/>
            <person name="Phillips C.A."/>
            <person name="Spriggs T."/>
            <person name="Hedblom E."/>
            <person name="Cotton M.D."/>
            <person name="Utterback T.R."/>
            <person name="Hanna M.C."/>
            <person name="Nguyen D.T."/>
            <person name="Saudek D.M."/>
            <person name="Brandon R.C."/>
            <person name="Fine L.D."/>
            <person name="Fritchman J.L."/>
            <person name="Fuhrmann J.L."/>
            <person name="Geoghagen N.S.M."/>
            <person name="Gnehm C.L."/>
            <person name="McDonald L.A."/>
            <person name="Small K.V."/>
            <person name="Fraser C.M."/>
            <person name="Smith H.O."/>
            <person name="Venter J.C."/>
        </authorList>
    </citation>
    <scope>NUCLEOTIDE SEQUENCE [LARGE SCALE GENOMIC DNA]</scope>
    <source>
        <strain>ATCC 51907 / DSM 11121 / KW20 / Rd</strain>
    </source>
</reference>
<name>Y1029_HAEIN</name>
<comment type="subcellular location">
    <subcellularLocation>
        <location evidence="2">Cell inner membrane</location>
        <topology evidence="2">Multi-pass membrane protein</topology>
    </subcellularLocation>
</comment>
<comment type="similarity">
    <text evidence="2">Belongs to the TRAP transporter large permease family.</text>
</comment>
<sequence length="425" mass="45468">MTVIIFLSVLLGTIILGVPVAFALLICGIALMLHLDFFNAQILAQQLVSGADSFSLMAIPFFILAGEIMNEGGLSKRIIDLPMKLVGHKRGGLGFVAILSAMIMASLSGSAVADTAAVAAMLLPMMKTTGYPIHRSAGLIGTAGIIAPIIPPSIPFIVFGVASGVSITKLFLAGIFPGVIMGCCLAILWRWQAKRLNLMTFSKATKQDLCFSFKNSVWALMLPVIIIGGFRSGIFTPTEAGVVATFYALIVSLFIYHELPLKHLPKVLLAAAKTTAVVMFLVASANVTGYLITVAELPTMLTILLEPLIENPTILLLVIMLAVFVIGMVMDLTPTVLILTPVLMPLVEEAGIDPVYFGVLFILNTSIGLITPPVGNVLNVITGVSKLPFDQAAKGIMPYLGMMIMLLLTFIFIPELILMPLQWIQ</sequence>
<organism>
    <name type="scientific">Haemophilus influenzae (strain ATCC 51907 / DSM 11121 / KW20 / Rd)</name>
    <dbReference type="NCBI Taxonomy" id="71421"/>
    <lineage>
        <taxon>Bacteria</taxon>
        <taxon>Pseudomonadati</taxon>
        <taxon>Pseudomonadota</taxon>
        <taxon>Gammaproteobacteria</taxon>
        <taxon>Pasteurellales</taxon>
        <taxon>Pasteurellaceae</taxon>
        <taxon>Haemophilus</taxon>
    </lineage>
</organism>